<feature type="chain" id="PRO_0000201988" description="Virulence plasmid ParA family protein pGP5-D">
    <location>
        <begin position="1"/>
        <end position="268"/>
    </location>
</feature>
<feature type="binding site" evidence="1">
    <location>
        <begin position="13"/>
        <end position="20"/>
    </location>
    <ligand>
        <name>ATP</name>
        <dbReference type="ChEBI" id="CHEBI:30616"/>
    </ligand>
</feature>
<reference key="1">
    <citation type="journal article" date="1997" name="Microbiology">
        <title>Plasmid diversity in Chlamydia.</title>
        <authorList>
            <person name="Thomas N.S."/>
            <person name="Lusher M."/>
            <person name="Storey C.C."/>
            <person name="Clarke I.N."/>
        </authorList>
    </citation>
    <scope>NUCLEOTIDE SEQUENCE [GENOMIC DNA]</scope>
    <source>
        <strain>MoPn / Nigg</strain>
    </source>
</reference>
<reference key="2">
    <citation type="journal article" date="2000" name="Nucleic Acids Res.">
        <title>Genome sequences of Chlamydia trachomatis MoPn and Chlamydia pneumoniae AR39.</title>
        <authorList>
            <person name="Read T.D."/>
            <person name="Brunham R.C."/>
            <person name="Shen C."/>
            <person name="Gill S.R."/>
            <person name="Heidelberg J.F."/>
            <person name="White O."/>
            <person name="Hickey E.K."/>
            <person name="Peterson J.D."/>
            <person name="Utterback T.R."/>
            <person name="Berry K.J."/>
            <person name="Bass S."/>
            <person name="Linher K.D."/>
            <person name="Weidman J.F."/>
            <person name="Khouri H.M."/>
            <person name="Craven B."/>
            <person name="Bowman C."/>
            <person name="Dodson R.J."/>
            <person name="Gwinn M.L."/>
            <person name="Nelson W.C."/>
            <person name="DeBoy R.T."/>
            <person name="Kolonay J.F."/>
            <person name="McClarty G."/>
            <person name="Salzberg S.L."/>
            <person name="Eisen J.A."/>
            <person name="Fraser C.M."/>
        </authorList>
    </citation>
    <scope>NUCLEOTIDE SEQUENCE [LARGE SCALE GENOMIC DNA]</scope>
    <source>
        <strain>MoPn / Nigg</strain>
    </source>
</reference>
<sequence length="268" mass="29670">MEYTLQTLVFCSFKGGTGKTTLSLNVGCNLAQFLGKRVLLIDLDPQSNLSSGLGASIEGNHKGLHEVMCASNDLKSIICKTKKTGVDIIPASFLSEQFREFSTNGIPSSNLRLFLDEYCSPLYDVCIVDTPPSLGGLTKEAFIAGDKLIVCLIPEPFSILGLQKIREFLISIGKPEEEHILGVALSFWDDRSSTNQTYIDIIESIYENKIFSTKIRRDISLSRSLLKEDSVINVYPTSRAATDILNLTHEISALLNSKHKQDFSQRTL</sequence>
<organism>
    <name type="scientific">Chlamydia muridarum (strain MoPn / Nigg)</name>
    <dbReference type="NCBI Taxonomy" id="243161"/>
    <lineage>
        <taxon>Bacteria</taxon>
        <taxon>Pseudomonadati</taxon>
        <taxon>Chlamydiota</taxon>
        <taxon>Chlamydiia</taxon>
        <taxon>Chlamydiales</taxon>
        <taxon>Chlamydiaceae</taxon>
        <taxon>Chlamydia/Chlamydophila group</taxon>
        <taxon>Chlamydia</taxon>
    </lineage>
</organism>
<comment type="similarity">
    <text evidence="2">Belongs to the ParA family.</text>
</comment>
<comment type="sequence caution" evidence="2">
    <conflict type="frameshift">
        <sequence resource="EMBL-CDS" id="CAA55378"/>
    </conflict>
</comment>
<proteinExistence type="inferred from homology"/>
<protein>
    <recommendedName>
        <fullName>Virulence plasmid ParA family protein pGP5-D</fullName>
    </recommendedName>
</protein>
<dbReference type="EMBL" id="X78726">
    <property type="protein sequence ID" value="CAA55378.1"/>
    <property type="status" value="ALT_FRAME"/>
    <property type="molecule type" value="Genomic_DNA"/>
</dbReference>
<dbReference type="EMBL" id="AE002162">
    <property type="protein sequence ID" value="AAF39717.1"/>
    <property type="molecule type" value="Genomic_DNA"/>
</dbReference>
<dbReference type="PIR" id="S44165">
    <property type="entry name" value="S44165"/>
</dbReference>
<dbReference type="SMR" id="Q46441"/>
<dbReference type="KEGG" id="cmu:TC_A06"/>
<dbReference type="eggNOG" id="COG1192">
    <property type="taxonomic scope" value="Bacteria"/>
</dbReference>
<dbReference type="HOGENOM" id="CLU_037612_1_4_0"/>
<dbReference type="Proteomes" id="UP000000800">
    <property type="component" value="Plasmid pMoPn"/>
</dbReference>
<dbReference type="GO" id="GO:0005524">
    <property type="term" value="F:ATP binding"/>
    <property type="evidence" value="ECO:0007669"/>
    <property type="project" value="UniProtKB-KW"/>
</dbReference>
<dbReference type="CDD" id="cd02042">
    <property type="entry name" value="ParAB_family"/>
    <property type="match status" value="1"/>
</dbReference>
<dbReference type="Gene3D" id="3.40.50.300">
    <property type="entry name" value="P-loop containing nucleotide triphosphate hydrolases"/>
    <property type="match status" value="1"/>
</dbReference>
<dbReference type="InterPro" id="IPR025669">
    <property type="entry name" value="AAA_dom"/>
</dbReference>
<dbReference type="InterPro" id="IPR050678">
    <property type="entry name" value="DNA_Partitioning_ATPase"/>
</dbReference>
<dbReference type="InterPro" id="IPR027417">
    <property type="entry name" value="P-loop_NTPase"/>
</dbReference>
<dbReference type="PANTHER" id="PTHR13696">
    <property type="entry name" value="P-LOOP CONTAINING NUCLEOSIDE TRIPHOSPHATE HYDROLASE"/>
    <property type="match status" value="1"/>
</dbReference>
<dbReference type="PANTHER" id="PTHR13696:SF52">
    <property type="entry name" value="PARA FAMILY PROTEIN CT_582"/>
    <property type="match status" value="1"/>
</dbReference>
<dbReference type="Pfam" id="PF13614">
    <property type="entry name" value="AAA_31"/>
    <property type="match status" value="1"/>
</dbReference>
<dbReference type="SUPFAM" id="SSF52540">
    <property type="entry name" value="P-loop containing nucleoside triphosphate hydrolases"/>
    <property type="match status" value="1"/>
</dbReference>
<gene>
    <name type="ordered locus">TC_A06</name>
</gene>
<keyword id="KW-0067">ATP-binding</keyword>
<keyword id="KW-0547">Nucleotide-binding</keyword>
<keyword id="KW-0614">Plasmid</keyword>
<geneLocation type="plasmid">
    <name>pMoPn</name>
</geneLocation>
<evidence type="ECO:0000255" key="1"/>
<evidence type="ECO:0000305" key="2"/>
<name>GP5D_CHLMU</name>
<accession>Q46441</accession>
<accession>Q9PLU5</accession>